<proteinExistence type="evidence at transcript level"/>
<organism>
    <name type="scientific">Solea solea</name>
    <name type="common">Common sole</name>
    <dbReference type="NCBI Taxonomy" id="90069"/>
    <lineage>
        <taxon>Eukaryota</taxon>
        <taxon>Metazoa</taxon>
        <taxon>Chordata</taxon>
        <taxon>Craniata</taxon>
        <taxon>Vertebrata</taxon>
        <taxon>Euteleostomi</taxon>
        <taxon>Actinopterygii</taxon>
        <taxon>Neopterygii</taxon>
        <taxon>Teleostei</taxon>
        <taxon>Neoteleostei</taxon>
        <taxon>Acanthomorphata</taxon>
        <taxon>Carangaria</taxon>
        <taxon>Pleuronectiformes</taxon>
        <taxon>Pleuronectoidei</taxon>
        <taxon>Soleidae</taxon>
        <taxon>Solea</taxon>
    </lineage>
</organism>
<protein>
    <recommendedName>
        <fullName>Rhodopsin</fullName>
    </recommendedName>
</protein>
<sequence>MNGTEGPYFYIPMLNTTGIVRSPYEYPQYYLVNPAAYAALCAYMFLLILLGFPINFLTLYVTIEHKKLRTPLNYILLNLAVANLFMVFGGFTTTMYTSMHGYFVLGRLGCNLEGFFATLGGEIGLWSLVVLAVERWMVVCKPISNFRFTENHAIMGLGFTWFAASACAVPPLVGWSRYIPEGMQCSCGVDYYTRAEGFNNESFVVYMFVCHFLIPLIVVFFCYGRLLCAVKEAAAAQQESETTQRAEREVTRMVVIMVIAFLICWCPYAGVAWYIFSNQGSEFGPLFMTIPAFFAKSSSIYNPLIYIFMNKQFRHCMITTLCCGKNPFEEEEGSTTTSKTEASSASSSSVSPA</sequence>
<accession>Q9YGZ5</accession>
<evidence type="ECO:0000250" key="1">
    <source>
        <dbReference type="UniProtKB" id="P02699"/>
    </source>
</evidence>
<evidence type="ECO:0000250" key="2">
    <source>
        <dbReference type="UniProtKB" id="P08100"/>
    </source>
</evidence>
<evidence type="ECO:0000250" key="3">
    <source>
        <dbReference type="UniProtKB" id="P32309"/>
    </source>
</evidence>
<evidence type="ECO:0000250" key="4">
    <source>
        <dbReference type="UniProtKB" id="P35359"/>
    </source>
</evidence>
<evidence type="ECO:0000255" key="5"/>
<evidence type="ECO:0000255" key="6">
    <source>
        <dbReference type="PROSITE-ProRule" id="PRU00521"/>
    </source>
</evidence>
<evidence type="ECO:0000256" key="7">
    <source>
        <dbReference type="SAM" id="MobiDB-lite"/>
    </source>
</evidence>
<evidence type="ECO:0000305" key="8"/>
<feature type="chain" id="PRO_0000197721" description="Rhodopsin">
    <location>
        <begin position="1"/>
        <end position="353"/>
    </location>
</feature>
<feature type="topological domain" description="Extracellular" evidence="8">
    <location>
        <begin position="1"/>
        <end position="36"/>
    </location>
</feature>
<feature type="transmembrane region" description="Helical; Name=1" evidence="1">
    <location>
        <begin position="37"/>
        <end position="61"/>
    </location>
</feature>
<feature type="topological domain" description="Cytoplasmic" evidence="8">
    <location>
        <begin position="62"/>
        <end position="73"/>
    </location>
</feature>
<feature type="transmembrane region" description="Helical; Name=2" evidence="1">
    <location>
        <begin position="74"/>
        <end position="96"/>
    </location>
</feature>
<feature type="topological domain" description="Extracellular" evidence="8">
    <location>
        <begin position="97"/>
        <end position="110"/>
    </location>
</feature>
<feature type="transmembrane region" description="Helical; Name=3" evidence="1">
    <location>
        <begin position="111"/>
        <end position="133"/>
    </location>
</feature>
<feature type="topological domain" description="Cytoplasmic" evidence="8">
    <location>
        <begin position="134"/>
        <end position="152"/>
    </location>
</feature>
<feature type="transmembrane region" description="Helical; Name=4" evidence="1">
    <location>
        <begin position="153"/>
        <end position="173"/>
    </location>
</feature>
<feature type="topological domain" description="Extracellular" evidence="8">
    <location>
        <begin position="174"/>
        <end position="202"/>
    </location>
</feature>
<feature type="transmembrane region" description="Helical; Name=5" evidence="1">
    <location>
        <begin position="203"/>
        <end position="224"/>
    </location>
</feature>
<feature type="topological domain" description="Cytoplasmic" evidence="8">
    <location>
        <begin position="225"/>
        <end position="252"/>
    </location>
</feature>
<feature type="transmembrane region" description="Helical; Name=6" evidence="1">
    <location>
        <begin position="253"/>
        <end position="274"/>
    </location>
</feature>
<feature type="topological domain" description="Extracellular" evidence="8">
    <location>
        <begin position="275"/>
        <end position="286"/>
    </location>
</feature>
<feature type="transmembrane region" description="Helical; Name=7" evidence="1">
    <location>
        <begin position="287"/>
        <end position="308"/>
    </location>
</feature>
<feature type="topological domain" description="Cytoplasmic" evidence="8">
    <location>
        <begin position="309"/>
        <end position="353"/>
    </location>
</feature>
<feature type="region of interest" description="Disordered" evidence="7">
    <location>
        <begin position="329"/>
        <end position="353"/>
    </location>
</feature>
<feature type="short sequence motif" description="'Ionic lock' involved in activated form stabilization" evidence="1">
    <location>
        <begin position="134"/>
        <end position="136"/>
    </location>
</feature>
<feature type="compositionally biased region" description="Low complexity" evidence="7">
    <location>
        <begin position="334"/>
        <end position="353"/>
    </location>
</feature>
<feature type="site" description="Plays an important role in the conformation switch to the active conformation" evidence="1">
    <location>
        <position position="113"/>
    </location>
</feature>
<feature type="modified residue" description="N6-(retinylidene)lysine" evidence="1">
    <location>
        <position position="296"/>
    </location>
</feature>
<feature type="lipid moiety-binding region" description="S-palmitoyl cysteine" evidence="1">
    <location>
        <position position="322"/>
    </location>
</feature>
<feature type="lipid moiety-binding region" description="S-palmitoyl cysteine" evidence="1">
    <location>
        <position position="323"/>
    </location>
</feature>
<feature type="glycosylation site" description="N-linked (GlcNAc...) asparagine" evidence="5">
    <location>
        <position position="2"/>
    </location>
</feature>
<feature type="glycosylation site" description="N-linked (GlcNAc...) asparagine" evidence="5">
    <location>
        <position position="15"/>
    </location>
</feature>
<feature type="glycosylation site" description="N-linked (GlcNAc...) asparagine" evidence="5">
    <location>
        <position position="200"/>
    </location>
</feature>
<feature type="disulfide bond" evidence="6">
    <location>
        <begin position="110"/>
        <end position="187"/>
    </location>
</feature>
<gene>
    <name type="primary">rho</name>
</gene>
<reference key="1">
    <citation type="submission" date="1999-01" db="EMBL/GenBank/DDBJ databases">
        <title>Comparative analysis of opsins in Mediterranian coastal fish.</title>
        <authorList>
            <person name="Archer S.N."/>
            <person name="Hirano J."/>
        </authorList>
    </citation>
    <scope>NUCLEOTIDE SEQUENCE [MRNA]</scope>
    <source>
        <tissue>Retina</tissue>
    </source>
</reference>
<keyword id="KW-0966">Cell projection</keyword>
<keyword id="KW-0157">Chromophore</keyword>
<keyword id="KW-1015">Disulfide bond</keyword>
<keyword id="KW-0297">G-protein coupled receptor</keyword>
<keyword id="KW-0325">Glycoprotein</keyword>
<keyword id="KW-0449">Lipoprotein</keyword>
<keyword id="KW-0472">Membrane</keyword>
<keyword id="KW-0564">Palmitate</keyword>
<keyword id="KW-0597">Phosphoprotein</keyword>
<keyword id="KW-0600">Photoreceptor protein</keyword>
<keyword id="KW-0675">Receptor</keyword>
<keyword id="KW-0681">Retinal protein</keyword>
<keyword id="KW-0716">Sensory transduction</keyword>
<keyword id="KW-0807">Transducer</keyword>
<keyword id="KW-0812">Transmembrane</keyword>
<keyword id="KW-1133">Transmembrane helix</keyword>
<keyword id="KW-0844">Vision</keyword>
<name>OPSD_SOLSO</name>
<comment type="function">
    <text evidence="1 2 3">Photoreceptor required for image-forming vision at low light intensity. While most salt water fish species use retinal as chromophore, most freshwater fish use 3-dehydroretinal, or a mixture of retinal and 3-dehydroretinal (By similarity). Light-induced isomerization of 11-cis to all-trans retinal triggers a conformational change that activates signaling via G-proteins. Subsequent receptor phosphorylation mediates displacement of the bound G-protein alpha subunit by arrestin and terminates signaling (By similarity).</text>
</comment>
<comment type="subcellular location">
    <subcellularLocation>
        <location evidence="2">Membrane</location>
        <topology evidence="2">Multi-pass membrane protein</topology>
    </subcellularLocation>
    <subcellularLocation>
        <location evidence="4">Cell projection</location>
        <location evidence="4">Cilium</location>
        <location evidence="4">Photoreceptor outer segment</location>
    </subcellularLocation>
    <text evidence="2">Synthesized in the inner segment (IS) of rod photoreceptor cells before vectorial transport to disk membranes in the rod outer segment (OS) photosensory cilia.</text>
</comment>
<comment type="PTM">
    <text evidence="1">Phosphorylated on some or all of the serine and threonine residues present in the C-terminal region.</text>
</comment>
<comment type="PTM">
    <text evidence="1">Contains one covalently linked retinal chromophore.</text>
</comment>
<comment type="similarity">
    <text evidence="6">Belongs to the G-protein coupled receptor 1 family. Opsin subfamily.</text>
</comment>
<dbReference type="EMBL" id="Y18672">
    <property type="protein sequence ID" value="CAA77254.1"/>
    <property type="molecule type" value="mRNA"/>
</dbReference>
<dbReference type="SMR" id="Q9YGZ5"/>
<dbReference type="GlyCosmos" id="Q9YGZ5">
    <property type="glycosylation" value="3 sites, No reported glycans"/>
</dbReference>
<dbReference type="OrthoDB" id="5962323at2759"/>
<dbReference type="GO" id="GO:0016020">
    <property type="term" value="C:membrane"/>
    <property type="evidence" value="ECO:0000250"/>
    <property type="project" value="UniProtKB"/>
</dbReference>
<dbReference type="GO" id="GO:0097381">
    <property type="term" value="C:photoreceptor disc membrane"/>
    <property type="evidence" value="ECO:0000250"/>
    <property type="project" value="UniProtKB"/>
</dbReference>
<dbReference type="GO" id="GO:0005886">
    <property type="term" value="C:plasma membrane"/>
    <property type="evidence" value="ECO:0000250"/>
    <property type="project" value="UniProtKB"/>
</dbReference>
<dbReference type="GO" id="GO:0005502">
    <property type="term" value="F:11-cis retinal binding"/>
    <property type="evidence" value="ECO:0000250"/>
    <property type="project" value="UniProtKB"/>
</dbReference>
<dbReference type="GO" id="GO:0008020">
    <property type="term" value="F:G protein-coupled photoreceptor activity"/>
    <property type="evidence" value="ECO:0000250"/>
    <property type="project" value="UniProtKB"/>
</dbReference>
<dbReference type="GO" id="GO:0016038">
    <property type="term" value="P:absorption of visible light"/>
    <property type="evidence" value="ECO:0000250"/>
    <property type="project" value="UniProtKB"/>
</dbReference>
<dbReference type="GO" id="GO:0016056">
    <property type="term" value="P:G protein-coupled opsin signaling pathway"/>
    <property type="evidence" value="ECO:0000250"/>
    <property type="project" value="UniProtKB"/>
</dbReference>
<dbReference type="GO" id="GO:0007601">
    <property type="term" value="P:visual perception"/>
    <property type="evidence" value="ECO:0007669"/>
    <property type="project" value="UniProtKB-KW"/>
</dbReference>
<dbReference type="CDD" id="cd15080">
    <property type="entry name" value="7tmA_MWS_opsin"/>
    <property type="match status" value="1"/>
</dbReference>
<dbReference type="FunFam" id="1.20.1070.10:FF:000018">
    <property type="entry name" value="Rhodopsin"/>
    <property type="match status" value="1"/>
</dbReference>
<dbReference type="Gene3D" id="1.20.1070.10">
    <property type="entry name" value="Rhodopsin 7-helix transmembrane proteins"/>
    <property type="match status" value="1"/>
</dbReference>
<dbReference type="InterPro" id="IPR050125">
    <property type="entry name" value="GPCR_opsins"/>
</dbReference>
<dbReference type="InterPro" id="IPR000276">
    <property type="entry name" value="GPCR_Rhodpsn"/>
</dbReference>
<dbReference type="InterPro" id="IPR017452">
    <property type="entry name" value="GPCR_Rhodpsn_7TM"/>
</dbReference>
<dbReference type="InterPro" id="IPR001760">
    <property type="entry name" value="Opsin"/>
</dbReference>
<dbReference type="InterPro" id="IPR027430">
    <property type="entry name" value="Retinal_BS"/>
</dbReference>
<dbReference type="InterPro" id="IPR000732">
    <property type="entry name" value="Rhodopsin"/>
</dbReference>
<dbReference type="InterPro" id="IPR019477">
    <property type="entry name" value="Rhodopsin_N"/>
</dbReference>
<dbReference type="PANTHER" id="PTHR24240">
    <property type="entry name" value="OPSIN"/>
    <property type="match status" value="1"/>
</dbReference>
<dbReference type="Pfam" id="PF00001">
    <property type="entry name" value="7tm_1"/>
    <property type="match status" value="1"/>
</dbReference>
<dbReference type="Pfam" id="PF10413">
    <property type="entry name" value="Rhodopsin_N"/>
    <property type="match status" value="1"/>
</dbReference>
<dbReference type="PRINTS" id="PR00237">
    <property type="entry name" value="GPCRRHODOPSN"/>
</dbReference>
<dbReference type="PRINTS" id="PR00238">
    <property type="entry name" value="OPSIN"/>
</dbReference>
<dbReference type="PRINTS" id="PR00579">
    <property type="entry name" value="RHODOPSIN"/>
</dbReference>
<dbReference type="SUPFAM" id="SSF81321">
    <property type="entry name" value="Family A G protein-coupled receptor-like"/>
    <property type="match status" value="1"/>
</dbReference>
<dbReference type="PROSITE" id="PS00237">
    <property type="entry name" value="G_PROTEIN_RECEP_F1_1"/>
    <property type="match status" value="1"/>
</dbReference>
<dbReference type="PROSITE" id="PS50262">
    <property type="entry name" value="G_PROTEIN_RECEP_F1_2"/>
    <property type="match status" value="1"/>
</dbReference>
<dbReference type="PROSITE" id="PS00238">
    <property type="entry name" value="OPSIN"/>
    <property type="match status" value="1"/>
</dbReference>